<sequence length="95" mass="10571">MAFKFNAEVRTAQGKGASRRLRNNGQIPAIVYGGSEEPVSIILNHDELNNAQAHESFYSEVITLVIGGKEVAVKVQAMQRHPFKPKLVHIDFKRA</sequence>
<dbReference type="EMBL" id="CP000057">
    <property type="protein sequence ID" value="AAX88231.1"/>
    <property type="molecule type" value="Genomic_DNA"/>
</dbReference>
<dbReference type="RefSeq" id="WP_005660520.1">
    <property type="nucleotide sequence ID" value="NC_007146.2"/>
</dbReference>
<dbReference type="SMR" id="Q4QL66"/>
<dbReference type="GeneID" id="93220240"/>
<dbReference type="KEGG" id="hit:NTHI1410"/>
<dbReference type="HOGENOM" id="CLU_137946_0_0_6"/>
<dbReference type="Proteomes" id="UP000002525">
    <property type="component" value="Chromosome"/>
</dbReference>
<dbReference type="GO" id="GO:0022625">
    <property type="term" value="C:cytosolic large ribosomal subunit"/>
    <property type="evidence" value="ECO:0007669"/>
    <property type="project" value="TreeGrafter"/>
</dbReference>
<dbReference type="GO" id="GO:0008097">
    <property type="term" value="F:5S rRNA binding"/>
    <property type="evidence" value="ECO:0007669"/>
    <property type="project" value="InterPro"/>
</dbReference>
<dbReference type="GO" id="GO:0003735">
    <property type="term" value="F:structural constituent of ribosome"/>
    <property type="evidence" value="ECO:0007669"/>
    <property type="project" value="InterPro"/>
</dbReference>
<dbReference type="GO" id="GO:0006412">
    <property type="term" value="P:translation"/>
    <property type="evidence" value="ECO:0007669"/>
    <property type="project" value="UniProtKB-UniRule"/>
</dbReference>
<dbReference type="CDD" id="cd00495">
    <property type="entry name" value="Ribosomal_L25_TL5_CTC"/>
    <property type="match status" value="1"/>
</dbReference>
<dbReference type="FunFam" id="2.40.240.10:FF:000002">
    <property type="entry name" value="50S ribosomal protein L25"/>
    <property type="match status" value="1"/>
</dbReference>
<dbReference type="Gene3D" id="2.40.240.10">
    <property type="entry name" value="Ribosomal Protein L25, Chain P"/>
    <property type="match status" value="1"/>
</dbReference>
<dbReference type="HAMAP" id="MF_01336">
    <property type="entry name" value="Ribosomal_bL25"/>
    <property type="match status" value="1"/>
</dbReference>
<dbReference type="InterPro" id="IPR020056">
    <property type="entry name" value="Rbsml_bL25/Gln-tRNA_synth_N"/>
</dbReference>
<dbReference type="InterPro" id="IPR011035">
    <property type="entry name" value="Ribosomal_bL25/Gln-tRNA_synth"/>
</dbReference>
<dbReference type="InterPro" id="IPR020055">
    <property type="entry name" value="Ribosomal_bL25_short"/>
</dbReference>
<dbReference type="InterPro" id="IPR029751">
    <property type="entry name" value="Ribosomal_L25_dom"/>
</dbReference>
<dbReference type="InterPro" id="IPR020930">
    <property type="entry name" value="Ribosomal_uL5_bac-type"/>
</dbReference>
<dbReference type="NCBIfam" id="NF004612">
    <property type="entry name" value="PRK05943.1"/>
    <property type="match status" value="1"/>
</dbReference>
<dbReference type="PANTHER" id="PTHR33284">
    <property type="entry name" value="RIBOSOMAL PROTEIN L25/GLN-TRNA SYNTHETASE, ANTI-CODON-BINDING DOMAIN-CONTAINING PROTEIN"/>
    <property type="match status" value="1"/>
</dbReference>
<dbReference type="PANTHER" id="PTHR33284:SF1">
    <property type="entry name" value="RIBOSOMAL PROTEIN L25_GLN-TRNA SYNTHETASE, ANTI-CODON-BINDING DOMAIN-CONTAINING PROTEIN"/>
    <property type="match status" value="1"/>
</dbReference>
<dbReference type="Pfam" id="PF01386">
    <property type="entry name" value="Ribosomal_L25p"/>
    <property type="match status" value="1"/>
</dbReference>
<dbReference type="SUPFAM" id="SSF50715">
    <property type="entry name" value="Ribosomal protein L25-like"/>
    <property type="match status" value="1"/>
</dbReference>
<accession>Q4QL66</accession>
<gene>
    <name evidence="1" type="primary">rplY</name>
    <name type="ordered locus">NTHI1410</name>
</gene>
<name>RL25_HAEI8</name>
<evidence type="ECO:0000255" key="1">
    <source>
        <dbReference type="HAMAP-Rule" id="MF_01336"/>
    </source>
</evidence>
<evidence type="ECO:0000305" key="2"/>
<proteinExistence type="inferred from homology"/>
<comment type="function">
    <text evidence="1">This is one of the proteins that binds to the 5S RNA in the ribosome where it forms part of the central protuberance.</text>
</comment>
<comment type="subunit">
    <text evidence="1">Part of the 50S ribosomal subunit; part of the 5S rRNA/L5/L18/L25 subcomplex. Contacts the 5S rRNA. Binds to the 5S rRNA independently of L5 and L18.</text>
</comment>
<comment type="similarity">
    <text evidence="1">Belongs to the bacterial ribosomal protein bL25 family.</text>
</comment>
<organism>
    <name type="scientific">Haemophilus influenzae (strain 86-028NP)</name>
    <dbReference type="NCBI Taxonomy" id="281310"/>
    <lineage>
        <taxon>Bacteria</taxon>
        <taxon>Pseudomonadati</taxon>
        <taxon>Pseudomonadota</taxon>
        <taxon>Gammaproteobacteria</taxon>
        <taxon>Pasteurellales</taxon>
        <taxon>Pasteurellaceae</taxon>
        <taxon>Haemophilus</taxon>
    </lineage>
</organism>
<reference key="1">
    <citation type="journal article" date="2005" name="J. Bacteriol.">
        <title>Genomic sequence of an otitis media isolate of nontypeable Haemophilus influenzae: comparative study with H. influenzae serotype d, strain KW20.</title>
        <authorList>
            <person name="Harrison A."/>
            <person name="Dyer D.W."/>
            <person name="Gillaspy A."/>
            <person name="Ray W.C."/>
            <person name="Mungur R."/>
            <person name="Carson M.B."/>
            <person name="Zhong H."/>
            <person name="Gipson J."/>
            <person name="Gipson M."/>
            <person name="Johnson L.S."/>
            <person name="Lewis L."/>
            <person name="Bakaletz L.O."/>
            <person name="Munson R.S. Jr."/>
        </authorList>
    </citation>
    <scope>NUCLEOTIDE SEQUENCE [LARGE SCALE GENOMIC DNA]</scope>
    <source>
        <strain>86-028NP</strain>
    </source>
</reference>
<protein>
    <recommendedName>
        <fullName evidence="1">Large ribosomal subunit protein bL25</fullName>
    </recommendedName>
    <alternativeName>
        <fullName evidence="2">50S ribosomal protein L25</fullName>
    </alternativeName>
</protein>
<keyword id="KW-0687">Ribonucleoprotein</keyword>
<keyword id="KW-0689">Ribosomal protein</keyword>
<keyword id="KW-0694">RNA-binding</keyword>
<keyword id="KW-0699">rRNA-binding</keyword>
<feature type="chain" id="PRO_0000243105" description="Large ribosomal subunit protein bL25">
    <location>
        <begin position="1"/>
        <end position="95"/>
    </location>
</feature>